<comment type="function">
    <text evidence="1">Formation of pseudouridine at positions 38, 39 and 40 in the anticodon stem and loop of transfer RNAs.</text>
</comment>
<comment type="catalytic activity">
    <reaction evidence="1">
        <text>uridine(38/39/40) in tRNA = pseudouridine(38/39/40) in tRNA</text>
        <dbReference type="Rhea" id="RHEA:22376"/>
        <dbReference type="Rhea" id="RHEA-COMP:10085"/>
        <dbReference type="Rhea" id="RHEA-COMP:10087"/>
        <dbReference type="ChEBI" id="CHEBI:65314"/>
        <dbReference type="ChEBI" id="CHEBI:65315"/>
        <dbReference type="EC" id="5.4.99.12"/>
    </reaction>
</comment>
<comment type="subunit">
    <text evidence="1">Homodimer.</text>
</comment>
<comment type="similarity">
    <text evidence="1">Belongs to the tRNA pseudouridine synthase TruA family.</text>
</comment>
<proteinExistence type="inferred from homology"/>
<sequence>MSGQQSSPVYKIALGIEYDGSKYYGWQRQNEVRSVQEKLEKALSQVANEPINVFCAGRTDAGVHGTGQVVHFETTALRKDAAWTLGVNANLPGDIAVRWVKTVPDDFHARFSATARRYRYIIYNHRLRPAVLAKGVTHYYEPLDAERMHRAAQCLLGENDFTSFRAVQCQSRTPWRNVMHINVTRHGPYVVVDIKANAFVHHMVRNIVGSLLEVGAHNQPESWIAELLAARDRTLAAATAKAEGLYLVAVDYPDRFDLPKPPMGPLFLAD</sequence>
<protein>
    <recommendedName>
        <fullName evidence="1">tRNA pseudouridine synthase A</fullName>
        <ecNumber evidence="1">5.4.99.12</ecNumber>
    </recommendedName>
    <alternativeName>
        <fullName evidence="1">tRNA pseudouridine(38-40) synthase</fullName>
    </alternativeName>
    <alternativeName>
        <fullName evidence="1">tRNA pseudouridylate synthase I</fullName>
    </alternativeName>
    <alternativeName>
        <fullName evidence="1">tRNA-uridine isomerase I</fullName>
    </alternativeName>
</protein>
<feature type="chain" id="PRO_1000097780" description="tRNA pseudouridine synthase A">
    <location>
        <begin position="1"/>
        <end position="270"/>
    </location>
</feature>
<feature type="active site" description="Nucleophile" evidence="1">
    <location>
        <position position="60"/>
    </location>
</feature>
<feature type="binding site" evidence="1">
    <location>
        <position position="118"/>
    </location>
    <ligand>
        <name>substrate</name>
    </ligand>
</feature>
<dbReference type="EC" id="5.4.99.12" evidence="1"/>
<dbReference type="EMBL" id="AM933173">
    <property type="protein sequence ID" value="CAR38227.1"/>
    <property type="molecule type" value="Genomic_DNA"/>
</dbReference>
<dbReference type="RefSeq" id="WP_000016631.1">
    <property type="nucleotide sequence ID" value="NC_011274.1"/>
</dbReference>
<dbReference type="SMR" id="B5RCJ3"/>
<dbReference type="KEGG" id="seg:SG2398"/>
<dbReference type="HOGENOM" id="CLU_014673_0_2_6"/>
<dbReference type="Proteomes" id="UP000008321">
    <property type="component" value="Chromosome"/>
</dbReference>
<dbReference type="GO" id="GO:0003723">
    <property type="term" value="F:RNA binding"/>
    <property type="evidence" value="ECO:0007669"/>
    <property type="project" value="InterPro"/>
</dbReference>
<dbReference type="GO" id="GO:0160147">
    <property type="term" value="F:tRNA pseudouridine(38-40) synthase activity"/>
    <property type="evidence" value="ECO:0007669"/>
    <property type="project" value="UniProtKB-EC"/>
</dbReference>
<dbReference type="GO" id="GO:0031119">
    <property type="term" value="P:tRNA pseudouridine synthesis"/>
    <property type="evidence" value="ECO:0007669"/>
    <property type="project" value="UniProtKB-UniRule"/>
</dbReference>
<dbReference type="CDD" id="cd02570">
    <property type="entry name" value="PseudoU_synth_EcTruA"/>
    <property type="match status" value="1"/>
</dbReference>
<dbReference type="FunFam" id="3.30.70.580:FF:000001">
    <property type="entry name" value="tRNA pseudouridine synthase A"/>
    <property type="match status" value="1"/>
</dbReference>
<dbReference type="FunFam" id="3.30.70.660:FF:000001">
    <property type="entry name" value="tRNA pseudouridine synthase A"/>
    <property type="match status" value="1"/>
</dbReference>
<dbReference type="Gene3D" id="3.30.70.660">
    <property type="entry name" value="Pseudouridine synthase I, catalytic domain, C-terminal subdomain"/>
    <property type="match status" value="1"/>
</dbReference>
<dbReference type="Gene3D" id="3.30.70.580">
    <property type="entry name" value="Pseudouridine synthase I, catalytic domain, N-terminal subdomain"/>
    <property type="match status" value="1"/>
</dbReference>
<dbReference type="HAMAP" id="MF_00171">
    <property type="entry name" value="TruA"/>
    <property type="match status" value="1"/>
</dbReference>
<dbReference type="InterPro" id="IPR020103">
    <property type="entry name" value="PsdUridine_synth_cat_dom_sf"/>
</dbReference>
<dbReference type="InterPro" id="IPR001406">
    <property type="entry name" value="PsdUridine_synth_TruA"/>
</dbReference>
<dbReference type="InterPro" id="IPR020097">
    <property type="entry name" value="PsdUridine_synth_TruA_a/b_dom"/>
</dbReference>
<dbReference type="InterPro" id="IPR020095">
    <property type="entry name" value="PsdUridine_synth_TruA_C"/>
</dbReference>
<dbReference type="InterPro" id="IPR020094">
    <property type="entry name" value="TruA/RsuA/RluB/E/F_N"/>
</dbReference>
<dbReference type="NCBIfam" id="TIGR00071">
    <property type="entry name" value="hisT_truA"/>
    <property type="match status" value="1"/>
</dbReference>
<dbReference type="PANTHER" id="PTHR11142">
    <property type="entry name" value="PSEUDOURIDYLATE SYNTHASE"/>
    <property type="match status" value="1"/>
</dbReference>
<dbReference type="PANTHER" id="PTHR11142:SF0">
    <property type="entry name" value="TRNA PSEUDOURIDINE SYNTHASE-LIKE 1"/>
    <property type="match status" value="1"/>
</dbReference>
<dbReference type="Pfam" id="PF01416">
    <property type="entry name" value="PseudoU_synth_1"/>
    <property type="match status" value="2"/>
</dbReference>
<dbReference type="PIRSF" id="PIRSF001430">
    <property type="entry name" value="tRNA_psdUrid_synth"/>
    <property type="match status" value="1"/>
</dbReference>
<dbReference type="SUPFAM" id="SSF55120">
    <property type="entry name" value="Pseudouridine synthase"/>
    <property type="match status" value="1"/>
</dbReference>
<reference key="1">
    <citation type="journal article" date="2008" name="Genome Res.">
        <title>Comparative genome analysis of Salmonella enteritidis PT4 and Salmonella gallinarum 287/91 provides insights into evolutionary and host adaptation pathways.</title>
        <authorList>
            <person name="Thomson N.R."/>
            <person name="Clayton D.J."/>
            <person name="Windhorst D."/>
            <person name="Vernikos G."/>
            <person name="Davidson S."/>
            <person name="Churcher C."/>
            <person name="Quail M.A."/>
            <person name="Stevens M."/>
            <person name="Jones M.A."/>
            <person name="Watson M."/>
            <person name="Barron A."/>
            <person name="Layton A."/>
            <person name="Pickard D."/>
            <person name="Kingsley R.A."/>
            <person name="Bignell A."/>
            <person name="Clark L."/>
            <person name="Harris B."/>
            <person name="Ormond D."/>
            <person name="Abdellah Z."/>
            <person name="Brooks K."/>
            <person name="Cherevach I."/>
            <person name="Chillingworth T."/>
            <person name="Woodward J."/>
            <person name="Norberczak H."/>
            <person name="Lord A."/>
            <person name="Arrowsmith C."/>
            <person name="Jagels K."/>
            <person name="Moule S."/>
            <person name="Mungall K."/>
            <person name="Saunders M."/>
            <person name="Whitehead S."/>
            <person name="Chabalgoity J.A."/>
            <person name="Maskell D."/>
            <person name="Humphreys T."/>
            <person name="Roberts M."/>
            <person name="Barrow P.A."/>
            <person name="Dougan G."/>
            <person name="Parkhill J."/>
        </authorList>
    </citation>
    <scope>NUCLEOTIDE SEQUENCE [LARGE SCALE GENOMIC DNA]</scope>
    <source>
        <strain>287/91 / NCTC 13346</strain>
    </source>
</reference>
<organism>
    <name type="scientific">Salmonella gallinarum (strain 287/91 / NCTC 13346)</name>
    <dbReference type="NCBI Taxonomy" id="550538"/>
    <lineage>
        <taxon>Bacteria</taxon>
        <taxon>Pseudomonadati</taxon>
        <taxon>Pseudomonadota</taxon>
        <taxon>Gammaproteobacteria</taxon>
        <taxon>Enterobacterales</taxon>
        <taxon>Enterobacteriaceae</taxon>
        <taxon>Salmonella</taxon>
    </lineage>
</organism>
<evidence type="ECO:0000255" key="1">
    <source>
        <dbReference type="HAMAP-Rule" id="MF_00171"/>
    </source>
</evidence>
<keyword id="KW-0413">Isomerase</keyword>
<keyword id="KW-0819">tRNA processing</keyword>
<accession>B5RCJ3</accession>
<gene>
    <name evidence="1" type="primary">truA</name>
    <name type="ordered locus">SG2398</name>
</gene>
<name>TRUA_SALG2</name>